<feature type="chain" id="PRO_0000272834" description="Large ribosomal subunit protein uL23">
    <location>
        <begin position="1"/>
        <end position="98"/>
    </location>
</feature>
<accession>Q21M55</accession>
<protein>
    <recommendedName>
        <fullName evidence="1">Large ribosomal subunit protein uL23</fullName>
    </recommendedName>
    <alternativeName>
        <fullName evidence="2">50S ribosomal protein L23</fullName>
    </alternativeName>
</protein>
<name>RL23_SACD2</name>
<gene>
    <name evidence="1" type="primary">rplW</name>
    <name type="ordered locus">Sde_0962</name>
</gene>
<sequence>MNLERLYKVLLGPVISEKSAVVADKGNQVVFKVVKTATKPEIKAAVEKLFNVNVRDVRVLNVKGKTKRTRFGLGQRSDWKKAYVRLEQGQEIDFAIAE</sequence>
<organism>
    <name type="scientific">Saccharophagus degradans (strain 2-40 / ATCC 43961 / DSM 17024)</name>
    <dbReference type="NCBI Taxonomy" id="203122"/>
    <lineage>
        <taxon>Bacteria</taxon>
        <taxon>Pseudomonadati</taxon>
        <taxon>Pseudomonadota</taxon>
        <taxon>Gammaproteobacteria</taxon>
        <taxon>Cellvibrionales</taxon>
        <taxon>Cellvibrionaceae</taxon>
        <taxon>Saccharophagus</taxon>
    </lineage>
</organism>
<dbReference type="EMBL" id="CP000282">
    <property type="protein sequence ID" value="ABD80224.1"/>
    <property type="molecule type" value="Genomic_DNA"/>
</dbReference>
<dbReference type="RefSeq" id="WP_011467444.1">
    <property type="nucleotide sequence ID" value="NC_007912.1"/>
</dbReference>
<dbReference type="SMR" id="Q21M55"/>
<dbReference type="STRING" id="203122.Sde_0962"/>
<dbReference type="GeneID" id="98612647"/>
<dbReference type="KEGG" id="sde:Sde_0962"/>
<dbReference type="eggNOG" id="COG0089">
    <property type="taxonomic scope" value="Bacteria"/>
</dbReference>
<dbReference type="HOGENOM" id="CLU_037562_3_1_6"/>
<dbReference type="OrthoDB" id="9793353at2"/>
<dbReference type="Proteomes" id="UP000001947">
    <property type="component" value="Chromosome"/>
</dbReference>
<dbReference type="GO" id="GO:1990904">
    <property type="term" value="C:ribonucleoprotein complex"/>
    <property type="evidence" value="ECO:0007669"/>
    <property type="project" value="UniProtKB-KW"/>
</dbReference>
<dbReference type="GO" id="GO:0005840">
    <property type="term" value="C:ribosome"/>
    <property type="evidence" value="ECO:0007669"/>
    <property type="project" value="UniProtKB-KW"/>
</dbReference>
<dbReference type="GO" id="GO:0019843">
    <property type="term" value="F:rRNA binding"/>
    <property type="evidence" value="ECO:0007669"/>
    <property type="project" value="UniProtKB-UniRule"/>
</dbReference>
<dbReference type="GO" id="GO:0003735">
    <property type="term" value="F:structural constituent of ribosome"/>
    <property type="evidence" value="ECO:0007669"/>
    <property type="project" value="InterPro"/>
</dbReference>
<dbReference type="GO" id="GO:0006412">
    <property type="term" value="P:translation"/>
    <property type="evidence" value="ECO:0007669"/>
    <property type="project" value="UniProtKB-UniRule"/>
</dbReference>
<dbReference type="FunFam" id="3.30.70.330:FF:000001">
    <property type="entry name" value="50S ribosomal protein L23"/>
    <property type="match status" value="1"/>
</dbReference>
<dbReference type="Gene3D" id="3.30.70.330">
    <property type="match status" value="1"/>
</dbReference>
<dbReference type="HAMAP" id="MF_01369_B">
    <property type="entry name" value="Ribosomal_uL23_B"/>
    <property type="match status" value="1"/>
</dbReference>
<dbReference type="InterPro" id="IPR012677">
    <property type="entry name" value="Nucleotide-bd_a/b_plait_sf"/>
</dbReference>
<dbReference type="InterPro" id="IPR013025">
    <property type="entry name" value="Ribosomal_uL23-like"/>
</dbReference>
<dbReference type="InterPro" id="IPR012678">
    <property type="entry name" value="Ribosomal_uL23/eL15/eS24_sf"/>
</dbReference>
<dbReference type="NCBIfam" id="NF004359">
    <property type="entry name" value="PRK05738.1-3"/>
    <property type="match status" value="1"/>
</dbReference>
<dbReference type="NCBIfam" id="NF004363">
    <property type="entry name" value="PRK05738.2-4"/>
    <property type="match status" value="1"/>
</dbReference>
<dbReference type="PANTHER" id="PTHR11620">
    <property type="entry name" value="60S RIBOSOMAL PROTEIN L23A"/>
    <property type="match status" value="1"/>
</dbReference>
<dbReference type="Pfam" id="PF00276">
    <property type="entry name" value="Ribosomal_L23"/>
    <property type="match status" value="1"/>
</dbReference>
<dbReference type="SUPFAM" id="SSF54189">
    <property type="entry name" value="Ribosomal proteins S24e, L23 and L15e"/>
    <property type="match status" value="1"/>
</dbReference>
<comment type="function">
    <text evidence="1">One of the early assembly proteins it binds 23S rRNA. One of the proteins that surrounds the polypeptide exit tunnel on the outside of the ribosome. Forms the main docking site for trigger factor binding to the ribosome.</text>
</comment>
<comment type="subunit">
    <text evidence="1">Part of the 50S ribosomal subunit. Contacts protein L29, and trigger factor when it is bound to the ribosome.</text>
</comment>
<comment type="similarity">
    <text evidence="1">Belongs to the universal ribosomal protein uL23 family.</text>
</comment>
<keyword id="KW-1185">Reference proteome</keyword>
<keyword id="KW-0687">Ribonucleoprotein</keyword>
<keyword id="KW-0689">Ribosomal protein</keyword>
<keyword id="KW-0694">RNA-binding</keyword>
<keyword id="KW-0699">rRNA-binding</keyword>
<reference key="1">
    <citation type="journal article" date="2008" name="PLoS Genet.">
        <title>Complete genome sequence of the complex carbohydrate-degrading marine bacterium, Saccharophagus degradans strain 2-40 T.</title>
        <authorList>
            <person name="Weiner R.M."/>
            <person name="Taylor L.E. II"/>
            <person name="Henrissat B."/>
            <person name="Hauser L."/>
            <person name="Land M."/>
            <person name="Coutinho P.M."/>
            <person name="Rancurel C."/>
            <person name="Saunders E.H."/>
            <person name="Longmire A.G."/>
            <person name="Zhang H."/>
            <person name="Bayer E.A."/>
            <person name="Gilbert H.J."/>
            <person name="Larimer F."/>
            <person name="Zhulin I.B."/>
            <person name="Ekborg N.A."/>
            <person name="Lamed R."/>
            <person name="Richardson P.M."/>
            <person name="Borovok I."/>
            <person name="Hutcheson S."/>
        </authorList>
    </citation>
    <scope>NUCLEOTIDE SEQUENCE [LARGE SCALE GENOMIC DNA]</scope>
    <source>
        <strain>2-40 / ATCC 43961 / DSM 17024</strain>
    </source>
</reference>
<evidence type="ECO:0000255" key="1">
    <source>
        <dbReference type="HAMAP-Rule" id="MF_01369"/>
    </source>
</evidence>
<evidence type="ECO:0000305" key="2"/>
<proteinExistence type="inferred from homology"/>